<reference key="1">
    <citation type="journal article" date="2006" name="J. Bacteriol.">
        <title>Pathogenomic sequence analysis of Bacillus cereus and Bacillus thuringiensis isolates closely related to Bacillus anthracis.</title>
        <authorList>
            <person name="Han C.S."/>
            <person name="Xie G."/>
            <person name="Challacombe J.F."/>
            <person name="Altherr M.R."/>
            <person name="Bhotika S.S."/>
            <person name="Bruce D."/>
            <person name="Campbell C.S."/>
            <person name="Campbell M.L."/>
            <person name="Chen J."/>
            <person name="Chertkov O."/>
            <person name="Cleland C."/>
            <person name="Dimitrijevic M."/>
            <person name="Doggett N.A."/>
            <person name="Fawcett J.J."/>
            <person name="Glavina T."/>
            <person name="Goodwin L.A."/>
            <person name="Hill K.K."/>
            <person name="Hitchcock P."/>
            <person name="Jackson P.J."/>
            <person name="Keim P."/>
            <person name="Kewalramani A.R."/>
            <person name="Longmire J."/>
            <person name="Lucas S."/>
            <person name="Malfatti S."/>
            <person name="McMurry K."/>
            <person name="Meincke L.J."/>
            <person name="Misra M."/>
            <person name="Moseman B.L."/>
            <person name="Mundt M."/>
            <person name="Munk A.C."/>
            <person name="Okinaka R.T."/>
            <person name="Parson-Quintana B."/>
            <person name="Reilly L.P."/>
            <person name="Richardson P."/>
            <person name="Robinson D.L."/>
            <person name="Rubin E."/>
            <person name="Saunders E."/>
            <person name="Tapia R."/>
            <person name="Tesmer J.G."/>
            <person name="Thayer N."/>
            <person name="Thompson L.S."/>
            <person name="Tice H."/>
            <person name="Ticknor L.O."/>
            <person name="Wills P.L."/>
            <person name="Brettin T.S."/>
            <person name="Gilna P."/>
        </authorList>
    </citation>
    <scope>NUCLEOTIDE SEQUENCE [LARGE SCALE GENOMIC DNA]</scope>
    <source>
        <strain>97-27</strain>
    </source>
</reference>
<sequence>MTKVLFVKANNRPAEQAVSVKLYEAFLASYKEAHPNDTVVELDLYKEELPYVGVDMINGTFKAGKGFDLTEEEAKAVAVADKYLNQFLEADKVVFGFPLWNLTIPAVLHTYIDYLNRAGKTFKYTPEGPVGLIGDKKIALLNARGGVYSEGPAAEVEMAVKYVASMMGFFGATNMETVVIEGHNQFPDKAEEIITAGLEEAAKVANKF</sequence>
<protein>
    <recommendedName>
        <fullName evidence="1">FMN-dependent NADH:quinone oxidoreductase 3</fullName>
        <ecNumber evidence="1">1.6.5.-</ecNumber>
    </recommendedName>
    <alternativeName>
        <fullName evidence="1">Azo-dye reductase 3</fullName>
    </alternativeName>
    <alternativeName>
        <fullName evidence="1">FMN-dependent NADH-azo compound oxidoreductase 3</fullName>
    </alternativeName>
    <alternativeName>
        <fullName evidence="1">FMN-dependent NADH-azoreductase 3</fullName>
        <ecNumber evidence="1">1.7.1.17</ecNumber>
    </alternativeName>
</protein>
<proteinExistence type="inferred from homology"/>
<gene>
    <name evidence="1" type="primary">azoR3</name>
    <name type="ordered locus">BT9727_5090</name>
</gene>
<accession>Q6HAM6</accession>
<feature type="chain" id="PRO_0000245893" description="FMN-dependent NADH:quinone oxidoreductase 3">
    <location>
        <begin position="1"/>
        <end position="208"/>
    </location>
</feature>
<comment type="function">
    <text evidence="1">Quinone reductase that provides resistance to thiol-specific stress caused by electrophilic quinones.</text>
</comment>
<comment type="function">
    <text evidence="1">Also exhibits azoreductase activity. Catalyzes the reductive cleavage of the azo bond in aromatic azo compounds to the corresponding amines.</text>
</comment>
<comment type="catalytic activity">
    <reaction evidence="1">
        <text>2 a quinone + NADH + H(+) = 2 a 1,4-benzosemiquinone + NAD(+)</text>
        <dbReference type="Rhea" id="RHEA:65952"/>
        <dbReference type="ChEBI" id="CHEBI:15378"/>
        <dbReference type="ChEBI" id="CHEBI:57540"/>
        <dbReference type="ChEBI" id="CHEBI:57945"/>
        <dbReference type="ChEBI" id="CHEBI:132124"/>
        <dbReference type="ChEBI" id="CHEBI:134225"/>
    </reaction>
</comment>
<comment type="catalytic activity">
    <reaction evidence="1">
        <text>N,N-dimethyl-1,4-phenylenediamine + anthranilate + 2 NAD(+) = 2-(4-dimethylaminophenyl)diazenylbenzoate + 2 NADH + 2 H(+)</text>
        <dbReference type="Rhea" id="RHEA:55872"/>
        <dbReference type="ChEBI" id="CHEBI:15378"/>
        <dbReference type="ChEBI" id="CHEBI:15783"/>
        <dbReference type="ChEBI" id="CHEBI:16567"/>
        <dbReference type="ChEBI" id="CHEBI:57540"/>
        <dbReference type="ChEBI" id="CHEBI:57945"/>
        <dbReference type="ChEBI" id="CHEBI:71579"/>
        <dbReference type="EC" id="1.7.1.17"/>
    </reaction>
</comment>
<comment type="cofactor">
    <cofactor evidence="1">
        <name>FMN</name>
        <dbReference type="ChEBI" id="CHEBI:58210"/>
    </cofactor>
    <text evidence="1">Binds 1 FMN per subunit.</text>
</comment>
<comment type="subunit">
    <text evidence="1">Homodimer.</text>
</comment>
<comment type="similarity">
    <text evidence="1">Belongs to the azoreductase type 1 family.</text>
</comment>
<name>AZOR3_BACHK</name>
<evidence type="ECO:0000255" key="1">
    <source>
        <dbReference type="HAMAP-Rule" id="MF_01216"/>
    </source>
</evidence>
<keyword id="KW-0285">Flavoprotein</keyword>
<keyword id="KW-0288">FMN</keyword>
<keyword id="KW-0520">NAD</keyword>
<keyword id="KW-0560">Oxidoreductase</keyword>
<organism>
    <name type="scientific">Bacillus thuringiensis subsp. konkukian (strain 97-27)</name>
    <dbReference type="NCBI Taxonomy" id="281309"/>
    <lineage>
        <taxon>Bacteria</taxon>
        <taxon>Bacillati</taxon>
        <taxon>Bacillota</taxon>
        <taxon>Bacilli</taxon>
        <taxon>Bacillales</taxon>
        <taxon>Bacillaceae</taxon>
        <taxon>Bacillus</taxon>
        <taxon>Bacillus cereus group</taxon>
    </lineage>
</organism>
<dbReference type="EC" id="1.6.5.-" evidence="1"/>
<dbReference type="EC" id="1.7.1.17" evidence="1"/>
<dbReference type="EMBL" id="AE017355">
    <property type="protein sequence ID" value="AAT62649.1"/>
    <property type="molecule type" value="Genomic_DNA"/>
</dbReference>
<dbReference type="RefSeq" id="WP_000170049.1">
    <property type="nucleotide sequence ID" value="NC_005957.1"/>
</dbReference>
<dbReference type="RefSeq" id="YP_039400.1">
    <property type="nucleotide sequence ID" value="NC_005957.1"/>
</dbReference>
<dbReference type="SMR" id="Q6HAM6"/>
<dbReference type="KEGG" id="btk:BT9727_5090"/>
<dbReference type="PATRIC" id="fig|281309.8.peg.5415"/>
<dbReference type="HOGENOM" id="CLU_088964_3_1_9"/>
<dbReference type="Proteomes" id="UP000001301">
    <property type="component" value="Chromosome"/>
</dbReference>
<dbReference type="GO" id="GO:0009055">
    <property type="term" value="F:electron transfer activity"/>
    <property type="evidence" value="ECO:0007669"/>
    <property type="project" value="UniProtKB-UniRule"/>
</dbReference>
<dbReference type="GO" id="GO:0010181">
    <property type="term" value="F:FMN binding"/>
    <property type="evidence" value="ECO:0007669"/>
    <property type="project" value="UniProtKB-UniRule"/>
</dbReference>
<dbReference type="GO" id="GO:0016652">
    <property type="term" value="F:oxidoreductase activity, acting on NAD(P)H as acceptor"/>
    <property type="evidence" value="ECO:0007669"/>
    <property type="project" value="UniProtKB-UniRule"/>
</dbReference>
<dbReference type="GO" id="GO:0016655">
    <property type="term" value="F:oxidoreductase activity, acting on NAD(P)H, quinone or similar compound as acceptor"/>
    <property type="evidence" value="ECO:0007669"/>
    <property type="project" value="InterPro"/>
</dbReference>
<dbReference type="Gene3D" id="3.40.50.360">
    <property type="match status" value="1"/>
</dbReference>
<dbReference type="HAMAP" id="MF_01216">
    <property type="entry name" value="Azoreductase_type1"/>
    <property type="match status" value="1"/>
</dbReference>
<dbReference type="InterPro" id="IPR003680">
    <property type="entry name" value="Flavodoxin_fold"/>
</dbReference>
<dbReference type="InterPro" id="IPR029039">
    <property type="entry name" value="Flavoprotein-like_sf"/>
</dbReference>
<dbReference type="InterPro" id="IPR050104">
    <property type="entry name" value="FMN-dep_NADH:Q_OxRdtase_AzoR1"/>
</dbReference>
<dbReference type="InterPro" id="IPR023048">
    <property type="entry name" value="NADH:quinone_OxRdtase_FMN_depd"/>
</dbReference>
<dbReference type="NCBIfam" id="NF010075">
    <property type="entry name" value="PRK13556.1"/>
    <property type="match status" value="1"/>
</dbReference>
<dbReference type="PANTHER" id="PTHR43741">
    <property type="entry name" value="FMN-DEPENDENT NADH-AZOREDUCTASE 1"/>
    <property type="match status" value="1"/>
</dbReference>
<dbReference type="PANTHER" id="PTHR43741:SF4">
    <property type="entry name" value="FMN-DEPENDENT NADH:QUINONE OXIDOREDUCTASE"/>
    <property type="match status" value="1"/>
</dbReference>
<dbReference type="Pfam" id="PF02525">
    <property type="entry name" value="Flavodoxin_2"/>
    <property type="match status" value="1"/>
</dbReference>
<dbReference type="SUPFAM" id="SSF52218">
    <property type="entry name" value="Flavoproteins"/>
    <property type="match status" value="1"/>
</dbReference>